<proteinExistence type="evidence at transcript level"/>
<sequence>MEIPRQEIHIEIDNSIPSSKEFKTGLADAKPVVLMSALRSLHAGYFRISLSLCSQALLWKIMIAPESPSMSHMHSKLPSMAFHLLWYLALVTQVSLCFLYALKCIFFFDKVKEEFLHYIGVNYLYAPSISWLLMLQSAPMMEPNSVLYQTLFWIFAVPVLTLDIKLYGQWFTTEKRFLSMLANPASQVSVIANLVAARGAAEMGWNECALCMFSLGMVHYLVIFVTLYQRLPGGNNFPAKLRPIFFLFVAAPAMASLAWNSICGTFDAVAKMLFFLSLFIFMSLVCRPNLFKKSMKRFNVAWWAYSFPLTFLALDSVQYAQEVKDPVGSGLMLIFSSISVLIFLGMMVLTAANSNRLLRHDPVLGSATDPKDKQKTLSLNATNQN</sequence>
<protein>
    <recommendedName>
        <fullName>S-type anion channel SLAH1</fullName>
    </recommendedName>
    <alternativeName>
        <fullName>SLAC1-homolog protein 1</fullName>
    </alternativeName>
</protein>
<accession>Q5E930</accession>
<accession>O04592</accession>
<accession>Q84WB2</accession>
<feature type="chain" id="PRO_0000404260" description="S-type anion channel SLAH1">
    <location>
        <begin position="1"/>
        <end position="385"/>
    </location>
</feature>
<feature type="topological domain" description="Cytoplasmic" evidence="5">
    <location>
        <begin position="1"/>
        <end position="42"/>
    </location>
</feature>
<feature type="transmembrane region" description="Helical" evidence="2">
    <location>
        <begin position="43"/>
        <end position="65"/>
    </location>
</feature>
<feature type="topological domain" description="Extracellular" evidence="5">
    <location>
        <begin position="66"/>
        <end position="81"/>
    </location>
</feature>
<feature type="transmembrane region" description="Helical" evidence="2">
    <location>
        <begin position="82"/>
        <end position="102"/>
    </location>
</feature>
<feature type="topological domain" description="Cytoplasmic" evidence="5">
    <location>
        <begin position="103"/>
        <end position="114"/>
    </location>
</feature>
<feature type="transmembrane region" description="Helical" evidence="2">
    <location>
        <begin position="115"/>
        <end position="135"/>
    </location>
</feature>
<feature type="topological domain" description="Extracellular" evidence="5">
    <location>
        <begin position="136"/>
        <end position="150"/>
    </location>
</feature>
<feature type="transmembrane region" description="Helical" evidence="2">
    <location>
        <begin position="151"/>
        <end position="171"/>
    </location>
</feature>
<feature type="topological domain" description="Cytoplasmic" evidence="5">
    <location>
        <begin position="172"/>
        <end position="176"/>
    </location>
</feature>
<feature type="transmembrane region" description="Helical" evidence="2">
    <location>
        <begin position="177"/>
        <end position="197"/>
    </location>
</feature>
<feature type="topological domain" description="Extracellular" evidence="5">
    <location>
        <begin position="198"/>
        <end position="207"/>
    </location>
</feature>
<feature type="transmembrane region" description="Helical" evidence="2">
    <location>
        <begin position="208"/>
        <end position="228"/>
    </location>
</feature>
<feature type="topological domain" description="Cytoplasmic" evidence="5">
    <location>
        <begin position="229"/>
        <end position="243"/>
    </location>
</feature>
<feature type="transmembrane region" description="Helical" evidence="2">
    <location>
        <begin position="244"/>
        <end position="264"/>
    </location>
</feature>
<feature type="topological domain" description="Extracellular" evidence="5">
    <location>
        <position position="265"/>
    </location>
</feature>
<feature type="transmembrane region" description="Helical" evidence="2">
    <location>
        <begin position="266"/>
        <end position="286"/>
    </location>
</feature>
<feature type="topological domain" description="Cytoplasmic" evidence="5">
    <location>
        <begin position="287"/>
        <end position="299"/>
    </location>
</feature>
<feature type="transmembrane region" description="Helical" evidence="2">
    <location>
        <begin position="300"/>
        <end position="320"/>
    </location>
</feature>
<feature type="topological domain" description="Extracellular" evidence="5">
    <location>
        <begin position="321"/>
        <end position="330"/>
    </location>
</feature>
<feature type="transmembrane region" description="Helical" evidence="2">
    <location>
        <begin position="331"/>
        <end position="351"/>
    </location>
</feature>
<feature type="topological domain" description="Cytoplasmic" evidence="5">
    <location>
        <begin position="352"/>
        <end position="385"/>
    </location>
</feature>
<feature type="region of interest" description="Disordered" evidence="3">
    <location>
        <begin position="366"/>
        <end position="385"/>
    </location>
</feature>
<feature type="compositionally biased region" description="Polar residues" evidence="3">
    <location>
        <begin position="376"/>
        <end position="385"/>
    </location>
</feature>
<feature type="sequence conflict" description="In Ref. 3; AAO42083." evidence="5" ref="3">
    <original>L</original>
    <variation>I</variation>
    <location>
        <position position="215"/>
    </location>
</feature>
<organism>
    <name type="scientific">Arabidopsis thaliana</name>
    <name type="common">Mouse-ear cress</name>
    <dbReference type="NCBI Taxonomy" id="3702"/>
    <lineage>
        <taxon>Eukaryota</taxon>
        <taxon>Viridiplantae</taxon>
        <taxon>Streptophyta</taxon>
        <taxon>Embryophyta</taxon>
        <taxon>Tracheophyta</taxon>
        <taxon>Spermatophyta</taxon>
        <taxon>Magnoliopsida</taxon>
        <taxon>eudicotyledons</taxon>
        <taxon>Gunneridae</taxon>
        <taxon>Pentapetalae</taxon>
        <taxon>rosids</taxon>
        <taxon>malvids</taxon>
        <taxon>Brassicales</taxon>
        <taxon>Brassicaceae</taxon>
        <taxon>Camelineae</taxon>
        <taxon>Arabidopsis</taxon>
    </lineage>
</organism>
<dbReference type="EMBL" id="AC000375">
    <property type="protein sequence ID" value="AAB60772.1"/>
    <property type="status" value="ALT_SEQ"/>
    <property type="molecule type" value="Genomic_DNA"/>
</dbReference>
<dbReference type="EMBL" id="CP002684">
    <property type="protein sequence ID" value="AEE33945.1"/>
    <property type="molecule type" value="Genomic_DNA"/>
</dbReference>
<dbReference type="EMBL" id="BT004052">
    <property type="protein sequence ID" value="AAO42083.1"/>
    <property type="molecule type" value="mRNA"/>
</dbReference>
<dbReference type="EMBL" id="BT021090">
    <property type="protein sequence ID" value="AAX12860.1"/>
    <property type="molecule type" value="mRNA"/>
</dbReference>
<dbReference type="PIR" id="D96649">
    <property type="entry name" value="D96649"/>
</dbReference>
<dbReference type="RefSeq" id="NP_176418.2">
    <property type="nucleotide sequence ID" value="NM_104908.4"/>
</dbReference>
<dbReference type="SMR" id="Q5E930"/>
<dbReference type="STRING" id="3702.Q5E930"/>
<dbReference type="PaxDb" id="3702-AT1G62280.1"/>
<dbReference type="EnsemblPlants" id="AT1G62280.1">
    <property type="protein sequence ID" value="AT1G62280.1"/>
    <property type="gene ID" value="AT1G62280"/>
</dbReference>
<dbReference type="GeneID" id="842525"/>
<dbReference type="Gramene" id="AT1G62280.1">
    <property type="protein sequence ID" value="AT1G62280.1"/>
    <property type="gene ID" value="AT1G62280"/>
</dbReference>
<dbReference type="KEGG" id="ath:AT1G62280"/>
<dbReference type="Araport" id="AT1G62280"/>
<dbReference type="TAIR" id="AT1G62280">
    <property type="gene designation" value="SLAH1"/>
</dbReference>
<dbReference type="eggNOG" id="ENOG502QSGW">
    <property type="taxonomic scope" value="Eukaryota"/>
</dbReference>
<dbReference type="HOGENOM" id="CLU_044414_2_0_1"/>
<dbReference type="InParanoid" id="Q5E930"/>
<dbReference type="OMA" id="NECALCM"/>
<dbReference type="OrthoDB" id="1867618at2759"/>
<dbReference type="PhylomeDB" id="Q5E930"/>
<dbReference type="PRO" id="PR:Q5E930"/>
<dbReference type="Proteomes" id="UP000006548">
    <property type="component" value="Chromosome 1"/>
</dbReference>
<dbReference type="ExpressionAtlas" id="Q5E930">
    <property type="expression patterns" value="baseline and differential"/>
</dbReference>
<dbReference type="GO" id="GO:0005886">
    <property type="term" value="C:plasma membrane"/>
    <property type="evidence" value="ECO:0000314"/>
    <property type="project" value="TAIR"/>
</dbReference>
<dbReference type="GO" id="GO:0008308">
    <property type="term" value="F:voltage-gated monoatomic anion channel activity"/>
    <property type="evidence" value="ECO:0007669"/>
    <property type="project" value="InterPro"/>
</dbReference>
<dbReference type="GO" id="GO:0006821">
    <property type="term" value="P:chloride transport"/>
    <property type="evidence" value="ECO:0000315"/>
    <property type="project" value="TAIR"/>
</dbReference>
<dbReference type="GO" id="GO:0006873">
    <property type="term" value="P:intracellular monoatomic ion homeostasis"/>
    <property type="evidence" value="ECO:0000315"/>
    <property type="project" value="TAIR"/>
</dbReference>
<dbReference type="GO" id="GO:1901529">
    <property type="term" value="P:positive regulation of anion channel activity"/>
    <property type="evidence" value="ECO:0000314"/>
    <property type="project" value="TAIR"/>
</dbReference>
<dbReference type="GO" id="GO:0009651">
    <property type="term" value="P:response to salt stress"/>
    <property type="evidence" value="ECO:0000270"/>
    <property type="project" value="TAIR"/>
</dbReference>
<dbReference type="GO" id="GO:0009414">
    <property type="term" value="P:response to water deprivation"/>
    <property type="evidence" value="ECO:0000270"/>
    <property type="project" value="TAIR"/>
</dbReference>
<dbReference type="CDD" id="cd09323">
    <property type="entry name" value="TDT_SLAC1_like"/>
    <property type="match status" value="1"/>
</dbReference>
<dbReference type="FunFam" id="1.50.10.150:FF:000003">
    <property type="entry name" value="S-type anion channel SLAH1"/>
    <property type="match status" value="1"/>
</dbReference>
<dbReference type="Gene3D" id="1.50.10.150">
    <property type="entry name" value="Voltage-dependent anion channel"/>
    <property type="match status" value="1"/>
</dbReference>
<dbReference type="InterPro" id="IPR030183">
    <property type="entry name" value="SLAC/SLAH"/>
</dbReference>
<dbReference type="InterPro" id="IPR004695">
    <property type="entry name" value="SLAC1/Mae1/Ssu1/TehA"/>
</dbReference>
<dbReference type="InterPro" id="IPR038665">
    <property type="entry name" value="Voltage-dep_anion_channel_sf"/>
</dbReference>
<dbReference type="PANTHER" id="PTHR31269:SF60">
    <property type="entry name" value="S-TYPE ANION CHANNEL SLAH1"/>
    <property type="match status" value="1"/>
</dbReference>
<dbReference type="PANTHER" id="PTHR31269">
    <property type="entry name" value="S-TYPE ANION CHANNEL SLAH3"/>
    <property type="match status" value="1"/>
</dbReference>
<dbReference type="Pfam" id="PF03595">
    <property type="entry name" value="SLAC1"/>
    <property type="match status" value="1"/>
</dbReference>
<evidence type="ECO:0000250" key="1"/>
<evidence type="ECO:0000255" key="2"/>
<evidence type="ECO:0000256" key="3">
    <source>
        <dbReference type="SAM" id="MobiDB-lite"/>
    </source>
</evidence>
<evidence type="ECO:0000269" key="4">
    <source>
    </source>
</evidence>
<evidence type="ECO:0000305" key="5"/>
<keyword id="KW-1003">Cell membrane</keyword>
<keyword id="KW-0406">Ion transport</keyword>
<keyword id="KW-0472">Membrane</keyword>
<keyword id="KW-1185">Reference proteome</keyword>
<keyword id="KW-0812">Transmembrane</keyword>
<keyword id="KW-1133">Transmembrane helix</keyword>
<keyword id="KW-0813">Transport</keyword>
<reference key="1">
    <citation type="journal article" date="2000" name="Nature">
        <title>Sequence and analysis of chromosome 1 of the plant Arabidopsis thaliana.</title>
        <authorList>
            <person name="Theologis A."/>
            <person name="Ecker J.R."/>
            <person name="Palm C.J."/>
            <person name="Federspiel N.A."/>
            <person name="Kaul S."/>
            <person name="White O."/>
            <person name="Alonso J."/>
            <person name="Altafi H."/>
            <person name="Araujo R."/>
            <person name="Bowman C.L."/>
            <person name="Brooks S.Y."/>
            <person name="Buehler E."/>
            <person name="Chan A."/>
            <person name="Chao Q."/>
            <person name="Chen H."/>
            <person name="Cheuk R.F."/>
            <person name="Chin C.W."/>
            <person name="Chung M.K."/>
            <person name="Conn L."/>
            <person name="Conway A.B."/>
            <person name="Conway A.R."/>
            <person name="Creasy T.H."/>
            <person name="Dewar K."/>
            <person name="Dunn P."/>
            <person name="Etgu P."/>
            <person name="Feldblyum T.V."/>
            <person name="Feng J.-D."/>
            <person name="Fong B."/>
            <person name="Fujii C.Y."/>
            <person name="Gill J.E."/>
            <person name="Goldsmith A.D."/>
            <person name="Haas B."/>
            <person name="Hansen N.F."/>
            <person name="Hughes B."/>
            <person name="Huizar L."/>
            <person name="Hunter J.L."/>
            <person name="Jenkins J."/>
            <person name="Johnson-Hopson C."/>
            <person name="Khan S."/>
            <person name="Khaykin E."/>
            <person name="Kim C.J."/>
            <person name="Koo H.L."/>
            <person name="Kremenetskaia I."/>
            <person name="Kurtz D.B."/>
            <person name="Kwan A."/>
            <person name="Lam B."/>
            <person name="Langin-Hooper S."/>
            <person name="Lee A."/>
            <person name="Lee J.M."/>
            <person name="Lenz C.A."/>
            <person name="Li J.H."/>
            <person name="Li Y.-P."/>
            <person name="Lin X."/>
            <person name="Liu S.X."/>
            <person name="Liu Z.A."/>
            <person name="Luros J.S."/>
            <person name="Maiti R."/>
            <person name="Marziali A."/>
            <person name="Militscher J."/>
            <person name="Miranda M."/>
            <person name="Nguyen M."/>
            <person name="Nierman W.C."/>
            <person name="Osborne B.I."/>
            <person name="Pai G."/>
            <person name="Peterson J."/>
            <person name="Pham P.K."/>
            <person name="Rizzo M."/>
            <person name="Rooney T."/>
            <person name="Rowley D."/>
            <person name="Sakano H."/>
            <person name="Salzberg S.L."/>
            <person name="Schwartz J.R."/>
            <person name="Shinn P."/>
            <person name="Southwick A.M."/>
            <person name="Sun H."/>
            <person name="Tallon L.J."/>
            <person name="Tambunga G."/>
            <person name="Toriumi M.J."/>
            <person name="Town C.D."/>
            <person name="Utterback T."/>
            <person name="Van Aken S."/>
            <person name="Vaysberg M."/>
            <person name="Vysotskaia V.S."/>
            <person name="Walker M."/>
            <person name="Wu D."/>
            <person name="Yu G."/>
            <person name="Fraser C.M."/>
            <person name="Venter J.C."/>
            <person name="Davis R.W."/>
        </authorList>
    </citation>
    <scope>NUCLEOTIDE SEQUENCE [LARGE SCALE GENOMIC DNA]</scope>
    <source>
        <strain>cv. Columbia</strain>
    </source>
</reference>
<reference key="2">
    <citation type="journal article" date="2017" name="Plant J.">
        <title>Araport11: a complete reannotation of the Arabidopsis thaliana reference genome.</title>
        <authorList>
            <person name="Cheng C.Y."/>
            <person name="Krishnakumar V."/>
            <person name="Chan A.P."/>
            <person name="Thibaud-Nissen F."/>
            <person name="Schobel S."/>
            <person name="Town C.D."/>
        </authorList>
    </citation>
    <scope>GENOME REANNOTATION</scope>
    <source>
        <strain>cv. Columbia</strain>
    </source>
</reference>
<reference key="3">
    <citation type="journal article" date="2003" name="Science">
        <title>Empirical analysis of transcriptional activity in the Arabidopsis genome.</title>
        <authorList>
            <person name="Yamada K."/>
            <person name="Lim J."/>
            <person name="Dale J.M."/>
            <person name="Chen H."/>
            <person name="Shinn P."/>
            <person name="Palm C.J."/>
            <person name="Southwick A.M."/>
            <person name="Wu H.C."/>
            <person name="Kim C.J."/>
            <person name="Nguyen M."/>
            <person name="Pham P.K."/>
            <person name="Cheuk R.F."/>
            <person name="Karlin-Newmann G."/>
            <person name="Liu S.X."/>
            <person name="Lam B."/>
            <person name="Sakano H."/>
            <person name="Wu T."/>
            <person name="Yu G."/>
            <person name="Miranda M."/>
            <person name="Quach H.L."/>
            <person name="Tripp M."/>
            <person name="Chang C.H."/>
            <person name="Lee J.M."/>
            <person name="Toriumi M.J."/>
            <person name="Chan M.M."/>
            <person name="Tang C.C."/>
            <person name="Onodera C.S."/>
            <person name="Deng J.M."/>
            <person name="Akiyama K."/>
            <person name="Ansari Y."/>
            <person name="Arakawa T."/>
            <person name="Banh J."/>
            <person name="Banno F."/>
            <person name="Bowser L."/>
            <person name="Brooks S.Y."/>
            <person name="Carninci P."/>
            <person name="Chao Q."/>
            <person name="Choy N."/>
            <person name="Enju A."/>
            <person name="Goldsmith A.D."/>
            <person name="Gurjal M."/>
            <person name="Hansen N.F."/>
            <person name="Hayashizaki Y."/>
            <person name="Johnson-Hopson C."/>
            <person name="Hsuan V.W."/>
            <person name="Iida K."/>
            <person name="Karnes M."/>
            <person name="Khan S."/>
            <person name="Koesema E."/>
            <person name="Ishida J."/>
            <person name="Jiang P.X."/>
            <person name="Jones T."/>
            <person name="Kawai J."/>
            <person name="Kamiya A."/>
            <person name="Meyers C."/>
            <person name="Nakajima M."/>
            <person name="Narusaka M."/>
            <person name="Seki M."/>
            <person name="Sakurai T."/>
            <person name="Satou M."/>
            <person name="Tamse R."/>
            <person name="Vaysberg M."/>
            <person name="Wallender E.K."/>
            <person name="Wong C."/>
            <person name="Yamamura Y."/>
            <person name="Yuan S."/>
            <person name="Shinozaki K."/>
            <person name="Davis R.W."/>
            <person name="Theologis A."/>
            <person name="Ecker J.R."/>
        </authorList>
    </citation>
    <scope>NUCLEOTIDE SEQUENCE [LARGE SCALE MRNA]</scope>
    <source>
        <strain>cv. Columbia</strain>
    </source>
</reference>
<reference key="4">
    <citation type="submission" date="2005-02" db="EMBL/GenBank/DDBJ databases">
        <title>Arabidopsis ORF clones.</title>
        <authorList>
            <person name="Kim C.J."/>
            <person name="Chen H."/>
            <person name="Cheuk R.F."/>
            <person name="Shinn P."/>
            <person name="Ecker J.R."/>
        </authorList>
    </citation>
    <scope>NUCLEOTIDE SEQUENCE [LARGE SCALE MRNA]</scope>
    <source>
        <strain>cv. Columbia</strain>
    </source>
</reference>
<reference key="5">
    <citation type="journal article" date="2008" name="Nature">
        <title>CO2 regulator SLAC1 and its homologues are essential for anion homeostasis in plant cells.</title>
        <authorList>
            <person name="Negi J."/>
            <person name="Matsuda O."/>
            <person name="Nagasawa T."/>
            <person name="Oba Y."/>
            <person name="Takahashi H."/>
            <person name="Kawai-Yamada M."/>
            <person name="Uchimiya H."/>
            <person name="Hashimoto M."/>
            <person name="Iba K."/>
        </authorList>
    </citation>
    <scope>FUNCTION</scope>
    <scope>SUBCELLULAR LOCATION</scope>
    <scope>TISSUE SPECIFICITY</scope>
    <scope>GENE FAMILY</scope>
    <scope>NOMENCLATURE</scope>
    <source>
        <strain>cv. Columbia</strain>
    </source>
</reference>
<gene>
    <name type="primary">SLAH1</name>
    <name type="ordered locus">At1g62280</name>
    <name type="ORF">F19K23.20</name>
</gene>
<comment type="function">
    <text evidence="4">Slow, weak voltage-dependent S-type anion efflux channel involved in maintenance of anion homeostasis.</text>
</comment>
<comment type="subunit">
    <text evidence="1">Homotrimer.</text>
</comment>
<comment type="subcellular location">
    <subcellularLocation>
        <location evidence="4">Cell membrane</location>
        <topology evidence="4">Multi-pass membrane protein</topology>
    </subcellularLocation>
</comment>
<comment type="tissue specificity">
    <text evidence="4">Expressed in the vascular systems of root.</text>
</comment>
<comment type="similarity">
    <text evidence="5">Belongs to the SLAC1 S-type anion channel family.</text>
</comment>
<comment type="sequence caution" evidence="5">
    <conflict type="erroneous gene model prediction">
        <sequence resource="EMBL-CDS" id="AAB60772"/>
    </conflict>
</comment>
<name>SLAH1_ARATH</name>